<comment type="function">
    <text evidence="1">Catalyzes the ATP-dependent amination of UTP to CTP with either L-glutamine or ammonia as the source of nitrogen. Regulates intracellular CTP levels through interactions with the four ribonucleotide triphosphates.</text>
</comment>
<comment type="catalytic activity">
    <reaction evidence="1">
        <text>UTP + L-glutamine + ATP + H2O = CTP + L-glutamate + ADP + phosphate + 2 H(+)</text>
        <dbReference type="Rhea" id="RHEA:26426"/>
        <dbReference type="ChEBI" id="CHEBI:15377"/>
        <dbReference type="ChEBI" id="CHEBI:15378"/>
        <dbReference type="ChEBI" id="CHEBI:29985"/>
        <dbReference type="ChEBI" id="CHEBI:30616"/>
        <dbReference type="ChEBI" id="CHEBI:37563"/>
        <dbReference type="ChEBI" id="CHEBI:43474"/>
        <dbReference type="ChEBI" id="CHEBI:46398"/>
        <dbReference type="ChEBI" id="CHEBI:58359"/>
        <dbReference type="ChEBI" id="CHEBI:456216"/>
        <dbReference type="EC" id="6.3.4.2"/>
    </reaction>
</comment>
<comment type="catalytic activity">
    <reaction evidence="1">
        <text>L-glutamine + H2O = L-glutamate + NH4(+)</text>
        <dbReference type="Rhea" id="RHEA:15889"/>
        <dbReference type="ChEBI" id="CHEBI:15377"/>
        <dbReference type="ChEBI" id="CHEBI:28938"/>
        <dbReference type="ChEBI" id="CHEBI:29985"/>
        <dbReference type="ChEBI" id="CHEBI:58359"/>
    </reaction>
</comment>
<comment type="catalytic activity">
    <reaction evidence="1">
        <text>UTP + NH4(+) + ATP = CTP + ADP + phosphate + 2 H(+)</text>
        <dbReference type="Rhea" id="RHEA:16597"/>
        <dbReference type="ChEBI" id="CHEBI:15378"/>
        <dbReference type="ChEBI" id="CHEBI:28938"/>
        <dbReference type="ChEBI" id="CHEBI:30616"/>
        <dbReference type="ChEBI" id="CHEBI:37563"/>
        <dbReference type="ChEBI" id="CHEBI:43474"/>
        <dbReference type="ChEBI" id="CHEBI:46398"/>
        <dbReference type="ChEBI" id="CHEBI:456216"/>
    </reaction>
</comment>
<comment type="activity regulation">
    <text evidence="1">Allosterically activated by GTP, when glutamine is the substrate; GTP has no effect on the reaction when ammonia is the substrate. The allosteric effector GTP functions by stabilizing the protein conformation that binds the tetrahedral intermediate(s) formed during glutamine hydrolysis. Inhibited by the product CTP, via allosteric rather than competitive inhibition.</text>
</comment>
<comment type="pathway">
    <text evidence="1">Pyrimidine metabolism; CTP biosynthesis via de novo pathway; CTP from UDP: step 2/2.</text>
</comment>
<comment type="subunit">
    <text evidence="1">Homotetramer.</text>
</comment>
<comment type="miscellaneous">
    <text evidence="1">CTPSs have evolved a hybrid strategy for distinguishing between UTP and CTP. The overlapping regions of the product feedback inhibitory and substrate sites recognize a common feature in both compounds, the triphosphate moiety. To differentiate isosteric substrate and product pyrimidine rings, an additional pocket far from the expected kinase/ligase catalytic site, specifically recognizes the cytosine and ribose portions of the product inhibitor.</text>
</comment>
<comment type="similarity">
    <text evidence="1">Belongs to the CTP synthase family.</text>
</comment>
<dbReference type="EC" id="6.3.4.2" evidence="1"/>
<dbReference type="EMBL" id="CP000685">
    <property type="protein sequence ID" value="ABQ05410.1"/>
    <property type="molecule type" value="Genomic_DNA"/>
</dbReference>
<dbReference type="RefSeq" id="WP_012024449.1">
    <property type="nucleotide sequence ID" value="NZ_MUGZ01000022.1"/>
</dbReference>
<dbReference type="SMR" id="A5FHA4"/>
<dbReference type="STRING" id="376686.Fjoh_2383"/>
<dbReference type="MEROPS" id="C26.964"/>
<dbReference type="KEGG" id="fjo:Fjoh_2383"/>
<dbReference type="eggNOG" id="COG0504">
    <property type="taxonomic scope" value="Bacteria"/>
</dbReference>
<dbReference type="HOGENOM" id="CLU_011675_5_0_10"/>
<dbReference type="OrthoDB" id="9801107at2"/>
<dbReference type="UniPathway" id="UPA00159">
    <property type="reaction ID" value="UER00277"/>
</dbReference>
<dbReference type="Proteomes" id="UP000006694">
    <property type="component" value="Chromosome"/>
</dbReference>
<dbReference type="GO" id="GO:0005829">
    <property type="term" value="C:cytosol"/>
    <property type="evidence" value="ECO:0007669"/>
    <property type="project" value="TreeGrafter"/>
</dbReference>
<dbReference type="GO" id="GO:0005524">
    <property type="term" value="F:ATP binding"/>
    <property type="evidence" value="ECO:0007669"/>
    <property type="project" value="UniProtKB-KW"/>
</dbReference>
<dbReference type="GO" id="GO:0003883">
    <property type="term" value="F:CTP synthase activity"/>
    <property type="evidence" value="ECO:0007669"/>
    <property type="project" value="UniProtKB-UniRule"/>
</dbReference>
<dbReference type="GO" id="GO:0004359">
    <property type="term" value="F:glutaminase activity"/>
    <property type="evidence" value="ECO:0007669"/>
    <property type="project" value="RHEA"/>
</dbReference>
<dbReference type="GO" id="GO:0042802">
    <property type="term" value="F:identical protein binding"/>
    <property type="evidence" value="ECO:0007669"/>
    <property type="project" value="TreeGrafter"/>
</dbReference>
<dbReference type="GO" id="GO:0046872">
    <property type="term" value="F:metal ion binding"/>
    <property type="evidence" value="ECO:0007669"/>
    <property type="project" value="UniProtKB-KW"/>
</dbReference>
<dbReference type="GO" id="GO:0044210">
    <property type="term" value="P:'de novo' CTP biosynthetic process"/>
    <property type="evidence" value="ECO:0007669"/>
    <property type="project" value="UniProtKB-UniRule"/>
</dbReference>
<dbReference type="GO" id="GO:0019856">
    <property type="term" value="P:pyrimidine nucleobase biosynthetic process"/>
    <property type="evidence" value="ECO:0007669"/>
    <property type="project" value="TreeGrafter"/>
</dbReference>
<dbReference type="CDD" id="cd03113">
    <property type="entry name" value="CTPS_N"/>
    <property type="match status" value="1"/>
</dbReference>
<dbReference type="CDD" id="cd01746">
    <property type="entry name" value="GATase1_CTP_Synthase"/>
    <property type="match status" value="1"/>
</dbReference>
<dbReference type="FunFam" id="3.40.50.300:FF:000009">
    <property type="entry name" value="CTP synthase"/>
    <property type="match status" value="1"/>
</dbReference>
<dbReference type="FunFam" id="3.40.50.880:FF:000002">
    <property type="entry name" value="CTP synthase"/>
    <property type="match status" value="1"/>
</dbReference>
<dbReference type="Gene3D" id="3.40.50.880">
    <property type="match status" value="1"/>
</dbReference>
<dbReference type="Gene3D" id="3.40.50.300">
    <property type="entry name" value="P-loop containing nucleotide triphosphate hydrolases"/>
    <property type="match status" value="1"/>
</dbReference>
<dbReference type="HAMAP" id="MF_01227">
    <property type="entry name" value="PyrG"/>
    <property type="match status" value="1"/>
</dbReference>
<dbReference type="InterPro" id="IPR029062">
    <property type="entry name" value="Class_I_gatase-like"/>
</dbReference>
<dbReference type="InterPro" id="IPR004468">
    <property type="entry name" value="CTP_synthase"/>
</dbReference>
<dbReference type="InterPro" id="IPR017456">
    <property type="entry name" value="CTP_synthase_N"/>
</dbReference>
<dbReference type="InterPro" id="IPR017926">
    <property type="entry name" value="GATASE"/>
</dbReference>
<dbReference type="InterPro" id="IPR033828">
    <property type="entry name" value="GATase1_CTP_Synthase"/>
</dbReference>
<dbReference type="InterPro" id="IPR027417">
    <property type="entry name" value="P-loop_NTPase"/>
</dbReference>
<dbReference type="NCBIfam" id="NF003792">
    <property type="entry name" value="PRK05380.1"/>
    <property type="match status" value="1"/>
</dbReference>
<dbReference type="NCBIfam" id="TIGR00337">
    <property type="entry name" value="PyrG"/>
    <property type="match status" value="1"/>
</dbReference>
<dbReference type="PANTHER" id="PTHR11550">
    <property type="entry name" value="CTP SYNTHASE"/>
    <property type="match status" value="1"/>
</dbReference>
<dbReference type="PANTHER" id="PTHR11550:SF0">
    <property type="entry name" value="CTP SYNTHASE-RELATED"/>
    <property type="match status" value="1"/>
</dbReference>
<dbReference type="Pfam" id="PF06418">
    <property type="entry name" value="CTP_synth_N"/>
    <property type="match status" value="1"/>
</dbReference>
<dbReference type="Pfam" id="PF00117">
    <property type="entry name" value="GATase"/>
    <property type="match status" value="1"/>
</dbReference>
<dbReference type="SUPFAM" id="SSF52317">
    <property type="entry name" value="Class I glutamine amidotransferase-like"/>
    <property type="match status" value="1"/>
</dbReference>
<dbReference type="SUPFAM" id="SSF52540">
    <property type="entry name" value="P-loop containing nucleoside triphosphate hydrolases"/>
    <property type="match status" value="1"/>
</dbReference>
<dbReference type="PROSITE" id="PS51273">
    <property type="entry name" value="GATASE_TYPE_1"/>
    <property type="match status" value="1"/>
</dbReference>
<name>PYRG_FLAJ1</name>
<gene>
    <name evidence="1" type="primary">pyrG</name>
    <name type="ordered locus">Fjoh_2383</name>
</gene>
<sequence>MNQTKYIFVTGGVTSSLGKGIIAASLAKLLQGRGYRTTIQKFDPYINVDPGTLNPYEHGECYVTDDGAETDLDLGHYERFLNVPTSQANNVTTGRVYLSVIEKERRGEFLGKTVQVVPHITNEIKDRMQLLGKSGDYDIVITEIGGTVGDIESLPYIESVRQLVWELGENNGIVIHLTLVPYLAAAGELKTKPTQHSVKTLMESGIKADILVCRTEHELSQELRQKLALFCNVKKEAVIQSIDASTIYEVPNLMLEEGLDVVALKKLDLPKKASPDLKNWNTFLKRLKSPKQTVNIGLVGKYVEMQDCYKSILEAFIHAGAANETKVNVISIHSEHINADNVEEKLGTLDGVLVAPGFGERGIEGKIEAVRYVRENNIPFFGICLGMQMSVIEYSRNILGYADANSTEMNEKTPHPVVNLMEEQKNITDKGGTMRLGAWKCDIKPNTLAHRIYGEKTISERHRHRYEYNNKYADELQKAGLKASGVNPDTGLVEIVELENHPFFIGVQYHPEYKSTVANPHPIFVNFVAAAVNAHKK</sequence>
<feature type="chain" id="PRO_1000139456" description="CTP synthase">
    <location>
        <begin position="1"/>
        <end position="537"/>
    </location>
</feature>
<feature type="domain" description="Glutamine amidotransferase type-1" evidence="1">
    <location>
        <begin position="295"/>
        <end position="537"/>
    </location>
</feature>
<feature type="region of interest" description="Amidoligase domain" evidence="1">
    <location>
        <begin position="1"/>
        <end position="269"/>
    </location>
</feature>
<feature type="active site" description="Nucleophile; for glutamine hydrolysis" evidence="1">
    <location>
        <position position="384"/>
    </location>
</feature>
<feature type="active site" evidence="1">
    <location>
        <position position="510"/>
    </location>
</feature>
<feature type="active site" evidence="1">
    <location>
        <position position="512"/>
    </location>
</feature>
<feature type="binding site" evidence="1">
    <location>
        <position position="15"/>
    </location>
    <ligand>
        <name>CTP</name>
        <dbReference type="ChEBI" id="CHEBI:37563"/>
        <note>allosteric inhibitor</note>
    </ligand>
</feature>
<feature type="binding site" evidence="1">
    <location>
        <position position="15"/>
    </location>
    <ligand>
        <name>UTP</name>
        <dbReference type="ChEBI" id="CHEBI:46398"/>
    </ligand>
</feature>
<feature type="binding site" evidence="1">
    <location>
        <begin position="16"/>
        <end position="21"/>
    </location>
    <ligand>
        <name>ATP</name>
        <dbReference type="ChEBI" id="CHEBI:30616"/>
    </ligand>
</feature>
<feature type="binding site" evidence="1">
    <location>
        <position position="56"/>
    </location>
    <ligand>
        <name>L-glutamine</name>
        <dbReference type="ChEBI" id="CHEBI:58359"/>
    </ligand>
</feature>
<feature type="binding site" evidence="1">
    <location>
        <position position="73"/>
    </location>
    <ligand>
        <name>ATP</name>
        <dbReference type="ChEBI" id="CHEBI:30616"/>
    </ligand>
</feature>
<feature type="binding site" evidence="1">
    <location>
        <position position="73"/>
    </location>
    <ligand>
        <name>Mg(2+)</name>
        <dbReference type="ChEBI" id="CHEBI:18420"/>
    </ligand>
</feature>
<feature type="binding site" evidence="1">
    <location>
        <position position="143"/>
    </location>
    <ligand>
        <name>Mg(2+)</name>
        <dbReference type="ChEBI" id="CHEBI:18420"/>
    </ligand>
</feature>
<feature type="binding site" evidence="1">
    <location>
        <begin position="150"/>
        <end position="152"/>
    </location>
    <ligand>
        <name>CTP</name>
        <dbReference type="ChEBI" id="CHEBI:37563"/>
        <note>allosteric inhibitor</note>
    </ligand>
</feature>
<feature type="binding site" evidence="1">
    <location>
        <begin position="190"/>
        <end position="195"/>
    </location>
    <ligand>
        <name>CTP</name>
        <dbReference type="ChEBI" id="CHEBI:37563"/>
        <note>allosteric inhibitor</note>
    </ligand>
</feature>
<feature type="binding site" evidence="1">
    <location>
        <begin position="190"/>
        <end position="195"/>
    </location>
    <ligand>
        <name>UTP</name>
        <dbReference type="ChEBI" id="CHEBI:46398"/>
    </ligand>
</feature>
<feature type="binding site" evidence="1">
    <location>
        <position position="226"/>
    </location>
    <ligand>
        <name>CTP</name>
        <dbReference type="ChEBI" id="CHEBI:37563"/>
        <note>allosteric inhibitor</note>
    </ligand>
</feature>
<feature type="binding site" evidence="1">
    <location>
        <position position="226"/>
    </location>
    <ligand>
        <name>UTP</name>
        <dbReference type="ChEBI" id="CHEBI:46398"/>
    </ligand>
</feature>
<feature type="binding site" evidence="1">
    <location>
        <position position="357"/>
    </location>
    <ligand>
        <name>L-glutamine</name>
        <dbReference type="ChEBI" id="CHEBI:58359"/>
    </ligand>
</feature>
<feature type="binding site" evidence="1">
    <location>
        <begin position="385"/>
        <end position="388"/>
    </location>
    <ligand>
        <name>L-glutamine</name>
        <dbReference type="ChEBI" id="CHEBI:58359"/>
    </ligand>
</feature>
<feature type="binding site" evidence="1">
    <location>
        <position position="408"/>
    </location>
    <ligand>
        <name>L-glutamine</name>
        <dbReference type="ChEBI" id="CHEBI:58359"/>
    </ligand>
</feature>
<feature type="binding site" evidence="1">
    <location>
        <position position="465"/>
    </location>
    <ligand>
        <name>L-glutamine</name>
        <dbReference type="ChEBI" id="CHEBI:58359"/>
    </ligand>
</feature>
<accession>A5FHA4</accession>
<keyword id="KW-0067">ATP-binding</keyword>
<keyword id="KW-0315">Glutamine amidotransferase</keyword>
<keyword id="KW-0436">Ligase</keyword>
<keyword id="KW-0460">Magnesium</keyword>
<keyword id="KW-0479">Metal-binding</keyword>
<keyword id="KW-0547">Nucleotide-binding</keyword>
<keyword id="KW-0665">Pyrimidine biosynthesis</keyword>
<proteinExistence type="inferred from homology"/>
<reference key="1">
    <citation type="journal article" date="2009" name="Appl. Environ. Microbiol.">
        <title>Novel features of the polysaccharide-digesting gliding bacterium Flavobacterium johnsoniae as revealed by genome sequence analysis.</title>
        <authorList>
            <person name="McBride M.J."/>
            <person name="Xie G."/>
            <person name="Martens E.C."/>
            <person name="Lapidus A."/>
            <person name="Henrissat B."/>
            <person name="Rhodes R.G."/>
            <person name="Goltsman E."/>
            <person name="Wang W."/>
            <person name="Xu J."/>
            <person name="Hunnicutt D.W."/>
            <person name="Staroscik A.M."/>
            <person name="Hoover T.R."/>
            <person name="Cheng Y.Q."/>
            <person name="Stein J.L."/>
        </authorList>
    </citation>
    <scope>NUCLEOTIDE SEQUENCE [LARGE SCALE GENOMIC DNA]</scope>
    <source>
        <strain>ATCC 17061 / DSM 2064 / JCM 8514 / BCRC 14874 / CCUG 350202 / NBRC 14942 / NCIMB 11054 / UW101</strain>
    </source>
</reference>
<evidence type="ECO:0000255" key="1">
    <source>
        <dbReference type="HAMAP-Rule" id="MF_01227"/>
    </source>
</evidence>
<organism>
    <name type="scientific">Flavobacterium johnsoniae (strain ATCC 17061 / DSM 2064 / JCM 8514 / BCRC 14874 / CCUG 350202 / NBRC 14942 / NCIMB 11054 / UW101)</name>
    <name type="common">Cytophaga johnsonae</name>
    <dbReference type="NCBI Taxonomy" id="376686"/>
    <lineage>
        <taxon>Bacteria</taxon>
        <taxon>Pseudomonadati</taxon>
        <taxon>Bacteroidota</taxon>
        <taxon>Flavobacteriia</taxon>
        <taxon>Flavobacteriales</taxon>
        <taxon>Flavobacteriaceae</taxon>
        <taxon>Flavobacterium</taxon>
    </lineage>
</organism>
<protein>
    <recommendedName>
        <fullName evidence="1">CTP synthase</fullName>
        <ecNumber evidence="1">6.3.4.2</ecNumber>
    </recommendedName>
    <alternativeName>
        <fullName evidence="1">Cytidine 5'-triphosphate synthase</fullName>
    </alternativeName>
    <alternativeName>
        <fullName evidence="1">Cytidine triphosphate synthetase</fullName>
        <shortName evidence="1">CTP synthetase</shortName>
        <shortName evidence="1">CTPS</shortName>
    </alternativeName>
    <alternativeName>
        <fullName evidence="1">UTP--ammonia ligase</fullName>
    </alternativeName>
</protein>